<sequence length="596" mass="65814">MPKRTLEDTELNPRDNYIKVSSKKSRKEKREKKSKDAEEPATDSTPIDIEVESKEARRERKRLKKAKRAQEAEEEQLPEGNAIESTSDADAAACIKAAKKAEKARLKALKKEGKEEKVDIPESTDSATPISVAPQQNGTTYTEDYNLSGLPQSEIDSFLTTNFITITDPLSASAALRPLIKFDYLPITDSAQRAPFKDFKAPTPIQAAAWPFLLAGRDVIGVAETGSGKTMAFAVPCVRYMSSLPKNQKNKGPRAVVVSPTRELAMQSYEQIVKLAKASGLECVCVYGGVPKDEQIRALKTADIVVATPGRLNDLINQGCADLSKARYVVLDEADRMLDKGFEEEIRKIINTTPSLGKRQTLMFTATWPESVRELASTFMTSPVKIAIGDNPTGDLRANSRIVQKVEVVEPRDKEYRLMQLLKQYQSGSQKDDRILVFCLYKKEATRVEGFIRQKGFRVAGIHGDLSQEQRTRSLEAFKSGNTPVLVATDVAARGLDIPAVKLVINCTFPLTVEDYVHRIGRTGRAGKDGLAITLFTEHDKAQSGALINVLKAANQPVPDELLKFGTTVKKKAHDAYGAFFKNVDTTKKATKITFD</sequence>
<accession>A7EYW0</accession>
<feature type="chain" id="PRO_0000310193" description="ATP-dependent RNA helicase dbp3">
    <location>
        <begin position="1"/>
        <end position="596"/>
    </location>
</feature>
<feature type="domain" description="Helicase ATP-binding" evidence="3">
    <location>
        <begin position="210"/>
        <end position="386"/>
    </location>
</feature>
<feature type="domain" description="Helicase C-terminal" evidence="4">
    <location>
        <begin position="417"/>
        <end position="566"/>
    </location>
</feature>
<feature type="region of interest" description="Disordered" evidence="5">
    <location>
        <begin position="1"/>
        <end position="87"/>
    </location>
</feature>
<feature type="region of interest" description="Disordered" evidence="5">
    <location>
        <begin position="115"/>
        <end position="139"/>
    </location>
</feature>
<feature type="coiled-coil region" evidence="2">
    <location>
        <begin position="47"/>
        <end position="120"/>
    </location>
</feature>
<feature type="short sequence motif" description="Q motif">
    <location>
        <begin position="180"/>
        <end position="207"/>
    </location>
</feature>
<feature type="short sequence motif" description="DEAD box">
    <location>
        <begin position="332"/>
        <end position="335"/>
    </location>
</feature>
<feature type="compositionally biased region" description="Basic and acidic residues" evidence="5">
    <location>
        <begin position="1"/>
        <end position="17"/>
    </location>
</feature>
<feature type="compositionally biased region" description="Basic residues" evidence="5">
    <location>
        <begin position="21"/>
        <end position="30"/>
    </location>
</feature>
<feature type="compositionally biased region" description="Polar residues" evidence="5">
    <location>
        <begin position="123"/>
        <end position="139"/>
    </location>
</feature>
<feature type="binding site" evidence="3">
    <location>
        <begin position="223"/>
        <end position="230"/>
    </location>
    <ligand>
        <name>ATP</name>
        <dbReference type="ChEBI" id="CHEBI:30616"/>
    </ligand>
</feature>
<protein>
    <recommendedName>
        <fullName>ATP-dependent RNA helicase dbp3</fullName>
        <ecNumber>3.6.4.13</ecNumber>
    </recommendedName>
</protein>
<comment type="function">
    <text evidence="1">ATP-dependent RNA helicase required for 60S ribosomal subunit synthesis. Involved in efficient pre-rRNA processing, predominantly at site A3, which is necessary for the normal formation of 25S and 5.8S rRNAs (By similarity).</text>
</comment>
<comment type="catalytic activity">
    <reaction>
        <text>ATP + H2O = ADP + phosphate + H(+)</text>
        <dbReference type="Rhea" id="RHEA:13065"/>
        <dbReference type="ChEBI" id="CHEBI:15377"/>
        <dbReference type="ChEBI" id="CHEBI:15378"/>
        <dbReference type="ChEBI" id="CHEBI:30616"/>
        <dbReference type="ChEBI" id="CHEBI:43474"/>
        <dbReference type="ChEBI" id="CHEBI:456216"/>
        <dbReference type="EC" id="3.6.4.13"/>
    </reaction>
</comment>
<comment type="subcellular location">
    <subcellularLocation>
        <location evidence="1">Nucleus</location>
        <location evidence="1">Nucleolus</location>
    </subcellularLocation>
</comment>
<comment type="domain">
    <text>The Q motif is unique to and characteristic of the DEAD box family of RNA helicases and controls ATP binding and hydrolysis.</text>
</comment>
<comment type="similarity">
    <text evidence="6">Belongs to the DEAD box helicase family. DDX5/DBP2 subfamily.</text>
</comment>
<comment type="sequence caution" evidence="6">
    <conflict type="erroneous gene model prediction">
        <sequence resource="EMBL-CDS" id="EDN94652"/>
    </conflict>
</comment>
<evidence type="ECO:0000250" key="1"/>
<evidence type="ECO:0000255" key="2"/>
<evidence type="ECO:0000255" key="3">
    <source>
        <dbReference type="PROSITE-ProRule" id="PRU00541"/>
    </source>
</evidence>
<evidence type="ECO:0000255" key="4">
    <source>
        <dbReference type="PROSITE-ProRule" id="PRU00542"/>
    </source>
</evidence>
<evidence type="ECO:0000256" key="5">
    <source>
        <dbReference type="SAM" id="MobiDB-lite"/>
    </source>
</evidence>
<evidence type="ECO:0000305" key="6"/>
<keyword id="KW-0067">ATP-binding</keyword>
<keyword id="KW-0175">Coiled coil</keyword>
<keyword id="KW-0347">Helicase</keyword>
<keyword id="KW-0378">Hydrolase</keyword>
<keyword id="KW-0547">Nucleotide-binding</keyword>
<keyword id="KW-0539">Nucleus</keyword>
<keyword id="KW-1185">Reference proteome</keyword>
<keyword id="KW-0690">Ribosome biogenesis</keyword>
<keyword id="KW-0694">RNA-binding</keyword>
<keyword id="KW-0698">rRNA processing</keyword>
<dbReference type="EC" id="3.6.4.13"/>
<dbReference type="EMBL" id="CH476636">
    <property type="protein sequence ID" value="EDN94652.1"/>
    <property type="status" value="ALT_SEQ"/>
    <property type="molecule type" value="Genomic_DNA"/>
</dbReference>
<dbReference type="RefSeq" id="XP_001588080.1">
    <property type="nucleotide sequence ID" value="XM_001588030.1"/>
</dbReference>
<dbReference type="SMR" id="A7EYW0"/>
<dbReference type="FunCoup" id="A7EYW0">
    <property type="interactions" value="369"/>
</dbReference>
<dbReference type="STRING" id="665079.A7EYW0"/>
<dbReference type="GeneID" id="5484272"/>
<dbReference type="KEGG" id="ssl:SS1G_10526"/>
<dbReference type="VEuPathDB" id="FungiDB:sscle_09g071970"/>
<dbReference type="InParanoid" id="A7EYW0"/>
<dbReference type="OrthoDB" id="196131at2759"/>
<dbReference type="Proteomes" id="UP000001312">
    <property type="component" value="Unassembled WGS sequence"/>
</dbReference>
<dbReference type="GO" id="GO:0005730">
    <property type="term" value="C:nucleolus"/>
    <property type="evidence" value="ECO:0000318"/>
    <property type="project" value="GO_Central"/>
</dbReference>
<dbReference type="GO" id="GO:0005524">
    <property type="term" value="F:ATP binding"/>
    <property type="evidence" value="ECO:0007669"/>
    <property type="project" value="UniProtKB-KW"/>
</dbReference>
<dbReference type="GO" id="GO:0016887">
    <property type="term" value="F:ATP hydrolysis activity"/>
    <property type="evidence" value="ECO:0007669"/>
    <property type="project" value="RHEA"/>
</dbReference>
<dbReference type="GO" id="GO:0003729">
    <property type="term" value="F:mRNA binding"/>
    <property type="evidence" value="ECO:0000318"/>
    <property type="project" value="GO_Central"/>
</dbReference>
<dbReference type="GO" id="GO:0003724">
    <property type="term" value="F:RNA helicase activity"/>
    <property type="evidence" value="ECO:0000318"/>
    <property type="project" value="GO_Central"/>
</dbReference>
<dbReference type="GO" id="GO:0006364">
    <property type="term" value="P:rRNA processing"/>
    <property type="evidence" value="ECO:0000318"/>
    <property type="project" value="GO_Central"/>
</dbReference>
<dbReference type="CDD" id="cd00268">
    <property type="entry name" value="DEADc"/>
    <property type="match status" value="1"/>
</dbReference>
<dbReference type="CDD" id="cd18787">
    <property type="entry name" value="SF2_C_DEAD"/>
    <property type="match status" value="1"/>
</dbReference>
<dbReference type="FunFam" id="3.40.50.300:FF:000008">
    <property type="entry name" value="ATP-dependent RNA helicase RhlB"/>
    <property type="match status" value="1"/>
</dbReference>
<dbReference type="Gene3D" id="3.40.50.300">
    <property type="entry name" value="P-loop containing nucleotide triphosphate hydrolases"/>
    <property type="match status" value="2"/>
</dbReference>
<dbReference type="InterPro" id="IPR011545">
    <property type="entry name" value="DEAD/DEAH_box_helicase_dom"/>
</dbReference>
<dbReference type="InterPro" id="IPR014001">
    <property type="entry name" value="Helicase_ATP-bd"/>
</dbReference>
<dbReference type="InterPro" id="IPR001650">
    <property type="entry name" value="Helicase_C-like"/>
</dbReference>
<dbReference type="InterPro" id="IPR027417">
    <property type="entry name" value="P-loop_NTPase"/>
</dbReference>
<dbReference type="InterPro" id="IPR000629">
    <property type="entry name" value="RNA-helicase_DEAD-box_CS"/>
</dbReference>
<dbReference type="PANTHER" id="PTHR47958">
    <property type="entry name" value="ATP-DEPENDENT RNA HELICASE DBP3"/>
    <property type="match status" value="1"/>
</dbReference>
<dbReference type="Pfam" id="PF00270">
    <property type="entry name" value="DEAD"/>
    <property type="match status" value="1"/>
</dbReference>
<dbReference type="Pfam" id="PF00271">
    <property type="entry name" value="Helicase_C"/>
    <property type="match status" value="1"/>
</dbReference>
<dbReference type="SMART" id="SM00487">
    <property type="entry name" value="DEXDc"/>
    <property type="match status" value="1"/>
</dbReference>
<dbReference type="SMART" id="SM00490">
    <property type="entry name" value="HELICc"/>
    <property type="match status" value="1"/>
</dbReference>
<dbReference type="SUPFAM" id="SSF52540">
    <property type="entry name" value="P-loop containing nucleoside triphosphate hydrolases"/>
    <property type="match status" value="1"/>
</dbReference>
<dbReference type="PROSITE" id="PS00039">
    <property type="entry name" value="DEAD_ATP_HELICASE"/>
    <property type="match status" value="1"/>
</dbReference>
<dbReference type="PROSITE" id="PS51192">
    <property type="entry name" value="HELICASE_ATP_BIND_1"/>
    <property type="match status" value="1"/>
</dbReference>
<dbReference type="PROSITE" id="PS51194">
    <property type="entry name" value="HELICASE_CTER"/>
    <property type="match status" value="1"/>
</dbReference>
<dbReference type="PROSITE" id="PS51195">
    <property type="entry name" value="Q_MOTIF"/>
    <property type="match status" value="1"/>
</dbReference>
<reference key="1">
    <citation type="journal article" date="2011" name="PLoS Genet.">
        <title>Genomic analysis of the necrotrophic fungal pathogens Sclerotinia sclerotiorum and Botrytis cinerea.</title>
        <authorList>
            <person name="Amselem J."/>
            <person name="Cuomo C.A."/>
            <person name="van Kan J.A.L."/>
            <person name="Viaud M."/>
            <person name="Benito E.P."/>
            <person name="Couloux A."/>
            <person name="Coutinho P.M."/>
            <person name="de Vries R.P."/>
            <person name="Dyer P.S."/>
            <person name="Fillinger S."/>
            <person name="Fournier E."/>
            <person name="Gout L."/>
            <person name="Hahn M."/>
            <person name="Kohn L."/>
            <person name="Lapalu N."/>
            <person name="Plummer K.M."/>
            <person name="Pradier J.-M."/>
            <person name="Quevillon E."/>
            <person name="Sharon A."/>
            <person name="Simon A."/>
            <person name="ten Have A."/>
            <person name="Tudzynski B."/>
            <person name="Tudzynski P."/>
            <person name="Wincker P."/>
            <person name="Andrew M."/>
            <person name="Anthouard V."/>
            <person name="Beever R.E."/>
            <person name="Beffa R."/>
            <person name="Benoit I."/>
            <person name="Bouzid O."/>
            <person name="Brault B."/>
            <person name="Chen Z."/>
            <person name="Choquer M."/>
            <person name="Collemare J."/>
            <person name="Cotton P."/>
            <person name="Danchin E.G."/>
            <person name="Da Silva C."/>
            <person name="Gautier A."/>
            <person name="Giraud C."/>
            <person name="Giraud T."/>
            <person name="Gonzalez C."/>
            <person name="Grossetete S."/>
            <person name="Gueldener U."/>
            <person name="Henrissat B."/>
            <person name="Howlett B.J."/>
            <person name="Kodira C."/>
            <person name="Kretschmer M."/>
            <person name="Lappartient A."/>
            <person name="Leroch M."/>
            <person name="Levis C."/>
            <person name="Mauceli E."/>
            <person name="Neuveglise C."/>
            <person name="Oeser B."/>
            <person name="Pearson M."/>
            <person name="Poulain J."/>
            <person name="Poussereau N."/>
            <person name="Quesneville H."/>
            <person name="Rascle C."/>
            <person name="Schumacher J."/>
            <person name="Segurens B."/>
            <person name="Sexton A."/>
            <person name="Silva E."/>
            <person name="Sirven C."/>
            <person name="Soanes D.M."/>
            <person name="Talbot N.J."/>
            <person name="Templeton M."/>
            <person name="Yandava C."/>
            <person name="Yarden O."/>
            <person name="Zeng Q."/>
            <person name="Rollins J.A."/>
            <person name="Lebrun M.-H."/>
            <person name="Dickman M."/>
        </authorList>
    </citation>
    <scope>NUCLEOTIDE SEQUENCE [LARGE SCALE GENOMIC DNA]</scope>
    <source>
        <strain>ATCC 18683 / 1980 / Ss-1</strain>
    </source>
</reference>
<name>DBP3_SCLS1</name>
<proteinExistence type="inferred from homology"/>
<gene>
    <name type="primary">dbp3</name>
    <name type="ORF">SS1G_10526</name>
</gene>
<organism>
    <name type="scientific">Sclerotinia sclerotiorum (strain ATCC 18683 / 1980 / Ss-1)</name>
    <name type="common">White mold</name>
    <name type="synonym">Whetzelinia sclerotiorum</name>
    <dbReference type="NCBI Taxonomy" id="665079"/>
    <lineage>
        <taxon>Eukaryota</taxon>
        <taxon>Fungi</taxon>
        <taxon>Dikarya</taxon>
        <taxon>Ascomycota</taxon>
        <taxon>Pezizomycotina</taxon>
        <taxon>Leotiomycetes</taxon>
        <taxon>Helotiales</taxon>
        <taxon>Sclerotiniaceae</taxon>
        <taxon>Sclerotinia</taxon>
    </lineage>
</organism>